<gene>
    <name type="primary">LAP1</name>
    <name type="ORF">Lema_P059220</name>
</gene>
<organism>
    <name type="scientific">Leptosphaeria maculans (strain JN3 / isolate v23.1.3 / race Av1-4-5-6-7-8)</name>
    <name type="common">Blackleg fungus</name>
    <name type="synonym">Phoma lingam</name>
    <dbReference type="NCBI Taxonomy" id="985895"/>
    <lineage>
        <taxon>Eukaryota</taxon>
        <taxon>Fungi</taxon>
        <taxon>Dikarya</taxon>
        <taxon>Ascomycota</taxon>
        <taxon>Pezizomycotina</taxon>
        <taxon>Dothideomycetes</taxon>
        <taxon>Pleosporomycetidae</taxon>
        <taxon>Pleosporales</taxon>
        <taxon>Pleosporineae</taxon>
        <taxon>Leptosphaeriaceae</taxon>
        <taxon>Plenodomus</taxon>
        <taxon>Plenodomus lingam/Leptosphaeria maculans species complex</taxon>
    </lineage>
</organism>
<name>LAP1_LEPMJ</name>
<protein>
    <recommendedName>
        <fullName>Leucine aminopeptidase 1</fullName>
        <ecNumber>3.4.11.-</ecNumber>
    </recommendedName>
    <alternativeName>
        <fullName>Leucyl aminopeptidase 1</fullName>
        <shortName>LAP1</shortName>
    </alternativeName>
</protein>
<comment type="function">
    <text evidence="1">Extracellular aminopeptidase that allows assimilation of proteinaceous substrates.</text>
</comment>
<comment type="cofactor">
    <cofactor evidence="1">
        <name>Zn(2+)</name>
        <dbReference type="ChEBI" id="CHEBI:29105"/>
    </cofactor>
    <text evidence="1">Binds 2 Zn(2+) ions per subunit.</text>
</comment>
<comment type="subunit">
    <text evidence="1">Monomer.</text>
</comment>
<comment type="subcellular location">
    <subcellularLocation>
        <location evidence="1">Secreted</location>
    </subcellularLocation>
</comment>
<comment type="similarity">
    <text evidence="3">Belongs to the peptidase M28 family. M28E subfamily.</text>
</comment>
<reference key="1">
    <citation type="journal article" date="2011" name="Nat. Commun.">
        <title>Effector diversification within compartments of the Leptosphaeria maculans genome affected by Repeat-Induced Point mutations.</title>
        <authorList>
            <person name="Rouxel T."/>
            <person name="Grandaubert J."/>
            <person name="Hane J.K."/>
            <person name="Hoede C."/>
            <person name="van de Wouw A.P."/>
            <person name="Couloux A."/>
            <person name="Dominguez V."/>
            <person name="Anthouard V."/>
            <person name="Bally P."/>
            <person name="Bourras S."/>
            <person name="Cozijnsen A.J."/>
            <person name="Ciuffetti L.M."/>
            <person name="Degrave A."/>
            <person name="Dilmaghani A."/>
            <person name="Duret L."/>
            <person name="Fudal I."/>
            <person name="Goodwin S.B."/>
            <person name="Gout L."/>
            <person name="Glaser N."/>
            <person name="Linglin J."/>
            <person name="Kema G.H.J."/>
            <person name="Lapalu N."/>
            <person name="Lawrence C.B."/>
            <person name="May K."/>
            <person name="Meyer M."/>
            <person name="Ollivier B."/>
            <person name="Poulain J."/>
            <person name="Schoch C.L."/>
            <person name="Simon A."/>
            <person name="Spatafora J.W."/>
            <person name="Stachowiak A."/>
            <person name="Turgeon B.G."/>
            <person name="Tyler B.M."/>
            <person name="Vincent D."/>
            <person name="Weissenbach J."/>
            <person name="Amselem J."/>
            <person name="Quesneville H."/>
            <person name="Oliver R.P."/>
            <person name="Wincker P."/>
            <person name="Balesdent M.-H."/>
            <person name="Howlett B.J."/>
        </authorList>
    </citation>
    <scope>NUCLEOTIDE SEQUENCE [LARGE SCALE GENOMIC DNA]</scope>
    <source>
        <strain>JN3 / isolate v23.1.3 / race Av1-4-5-6-7-8</strain>
    </source>
</reference>
<evidence type="ECO:0000250" key="1"/>
<evidence type="ECO:0000255" key="2"/>
<evidence type="ECO:0000305" key="3"/>
<proteinExistence type="inferred from homology"/>
<accession>E4ZHQ5</accession>
<sequence length="388" mass="43210">MRSSVLFSLYAATLVAAVAHPKDPQIVLQESQATIVEPDEYLIELSPGETRWVTEDDKWALRRENINFFDITHNKELGTLNHKLSTESVKFPSKPAHNESIVPLLKELKKENMRTHLETFTSFHTRYYKSHYGAESSAWLLEQVRKTLTDAGASKASVKAFPHPWGQASIIATIPGKSDKTVVIGAHQDSINLFLPSILAAPGADDDGSGTVTILEALRVLLKSEEVLKGEADNTIEFHWYSAEEGGLLGSQAIFQSYEKEGRDVKAMLQQDMTGYVQKTLDAGEPESVGVITDFVHPGLTEFIKKIITVYCDIPYVLTKCGYACSDHASASKAGYPSAFVIESDFKYSDNKIHTTEDKIEYLSFDHMLQHARLTLGLVYELAFAKFK</sequence>
<dbReference type="EC" id="3.4.11.-"/>
<dbReference type="EMBL" id="FP929065">
    <property type="protein sequence ID" value="CBX90888.1"/>
    <property type="molecule type" value="Genomic_DNA"/>
</dbReference>
<dbReference type="RefSeq" id="XP_003834253.1">
    <property type="nucleotide sequence ID" value="XM_003834205.1"/>
</dbReference>
<dbReference type="SMR" id="E4ZHQ5"/>
<dbReference type="FunCoup" id="E4ZHQ5">
    <property type="interactions" value="23"/>
</dbReference>
<dbReference type="STRING" id="985895.E4ZHQ5"/>
<dbReference type="MEROPS" id="M28.022"/>
<dbReference type="GlyCosmos" id="E4ZHQ5">
    <property type="glycosylation" value="1 site, No reported glycans"/>
</dbReference>
<dbReference type="EnsemblFungi" id="CBX90888">
    <property type="protein sequence ID" value="CBX90888"/>
    <property type="gene ID" value="LEMA_P059220.1"/>
</dbReference>
<dbReference type="GeneID" id="13284958"/>
<dbReference type="VEuPathDB" id="FungiDB:LEMA_P059220.1"/>
<dbReference type="eggNOG" id="KOG2195">
    <property type="taxonomic scope" value="Eukaryota"/>
</dbReference>
<dbReference type="HOGENOM" id="CLU_025866_0_0_1"/>
<dbReference type="InParanoid" id="E4ZHQ5"/>
<dbReference type="OMA" id="GMLQQDM"/>
<dbReference type="OrthoDB" id="2214at2759"/>
<dbReference type="Proteomes" id="UP000002668">
    <property type="component" value="Genome"/>
</dbReference>
<dbReference type="GO" id="GO:0005576">
    <property type="term" value="C:extracellular region"/>
    <property type="evidence" value="ECO:0007669"/>
    <property type="project" value="UniProtKB-SubCell"/>
</dbReference>
<dbReference type="GO" id="GO:0004177">
    <property type="term" value="F:aminopeptidase activity"/>
    <property type="evidence" value="ECO:0007669"/>
    <property type="project" value="UniProtKB-KW"/>
</dbReference>
<dbReference type="GO" id="GO:0046872">
    <property type="term" value="F:metal ion binding"/>
    <property type="evidence" value="ECO:0007669"/>
    <property type="project" value="UniProtKB-KW"/>
</dbReference>
<dbReference type="GO" id="GO:0008235">
    <property type="term" value="F:metalloexopeptidase activity"/>
    <property type="evidence" value="ECO:0007669"/>
    <property type="project" value="InterPro"/>
</dbReference>
<dbReference type="GO" id="GO:0006508">
    <property type="term" value="P:proteolysis"/>
    <property type="evidence" value="ECO:0007669"/>
    <property type="project" value="UniProtKB-KW"/>
</dbReference>
<dbReference type="CDD" id="cd03879">
    <property type="entry name" value="M28_AAP"/>
    <property type="match status" value="1"/>
</dbReference>
<dbReference type="FunFam" id="3.40.630.10:FF:000042">
    <property type="entry name" value="Peptide hydrolase"/>
    <property type="match status" value="1"/>
</dbReference>
<dbReference type="Gene3D" id="3.40.630.10">
    <property type="entry name" value="Zn peptidases"/>
    <property type="match status" value="1"/>
</dbReference>
<dbReference type="InterPro" id="IPR045175">
    <property type="entry name" value="M28_fam"/>
</dbReference>
<dbReference type="InterPro" id="IPR007484">
    <property type="entry name" value="Peptidase_M28"/>
</dbReference>
<dbReference type="PANTHER" id="PTHR12147:SF56">
    <property type="entry name" value="AMINOPEPTIDASE YDR415C-RELATED"/>
    <property type="match status" value="1"/>
</dbReference>
<dbReference type="PANTHER" id="PTHR12147">
    <property type="entry name" value="METALLOPEPTIDASE M28 FAMILY MEMBER"/>
    <property type="match status" value="1"/>
</dbReference>
<dbReference type="Pfam" id="PF04389">
    <property type="entry name" value="Peptidase_M28"/>
    <property type="match status" value="1"/>
</dbReference>
<dbReference type="SUPFAM" id="SSF53187">
    <property type="entry name" value="Zn-dependent exopeptidases"/>
    <property type="match status" value="1"/>
</dbReference>
<keyword id="KW-0031">Aminopeptidase</keyword>
<keyword id="KW-1015">Disulfide bond</keyword>
<keyword id="KW-0325">Glycoprotein</keyword>
<keyword id="KW-0378">Hydrolase</keyword>
<keyword id="KW-0479">Metal-binding</keyword>
<keyword id="KW-0645">Protease</keyword>
<keyword id="KW-1185">Reference proteome</keyword>
<keyword id="KW-0964">Secreted</keyword>
<keyword id="KW-0732">Signal</keyword>
<keyword id="KW-0862">Zinc</keyword>
<keyword id="KW-0865">Zymogen</keyword>
<feature type="signal peptide" evidence="2">
    <location>
        <begin position="1"/>
        <end position="19"/>
    </location>
</feature>
<feature type="propeptide" id="PRO_0000412411" evidence="1">
    <location>
        <begin position="20"/>
        <end position="88"/>
    </location>
</feature>
<feature type="chain" id="PRO_0000412412" description="Leucine aminopeptidase 1">
    <location>
        <begin position="89"/>
        <end position="388"/>
    </location>
</feature>
<feature type="binding site" evidence="1">
    <location>
        <position position="187"/>
    </location>
    <ligand>
        <name>Zn(2+)</name>
        <dbReference type="ChEBI" id="CHEBI:29105"/>
        <label>1</label>
    </ligand>
</feature>
<feature type="binding site" evidence="1">
    <location>
        <position position="206"/>
    </location>
    <ligand>
        <name>Zn(2+)</name>
        <dbReference type="ChEBI" id="CHEBI:29105"/>
        <label>1</label>
    </ligand>
</feature>
<feature type="binding site" evidence="1">
    <location>
        <position position="206"/>
    </location>
    <ligand>
        <name>Zn(2+)</name>
        <dbReference type="ChEBI" id="CHEBI:29105"/>
        <label>2</label>
        <note>catalytic</note>
    </ligand>
</feature>
<feature type="binding site" evidence="1">
    <location>
        <position position="245"/>
    </location>
    <ligand>
        <name>Zn(2+)</name>
        <dbReference type="ChEBI" id="CHEBI:29105"/>
        <label>2</label>
        <note>catalytic</note>
    </ligand>
</feature>
<feature type="binding site" evidence="1">
    <location>
        <position position="272"/>
    </location>
    <ligand>
        <name>Zn(2+)</name>
        <dbReference type="ChEBI" id="CHEBI:29105"/>
        <label>1</label>
    </ligand>
</feature>
<feature type="binding site" evidence="1">
    <location>
        <position position="354"/>
    </location>
    <ligand>
        <name>Zn(2+)</name>
        <dbReference type="ChEBI" id="CHEBI:29105"/>
        <label>2</label>
        <note>catalytic</note>
    </ligand>
</feature>
<feature type="glycosylation site" description="N-linked (GlcNAc...) asparagine" evidence="2">
    <location>
        <position position="98"/>
    </location>
</feature>
<feature type="disulfide bond" evidence="1">
    <location>
        <begin position="321"/>
        <end position="325"/>
    </location>
</feature>